<feature type="chain" id="PRO_0000416528" description="Rhodanese-like domain-containing protein 6">
    <location>
        <begin position="1"/>
        <end position="581"/>
    </location>
</feature>
<feature type="domain" description="Rhodanese" evidence="1">
    <location>
        <begin position="158"/>
        <end position="258"/>
    </location>
</feature>
<feature type="active site" description="Cysteine persulfide intermediate" evidence="1">
    <location>
        <position position="216"/>
    </location>
</feature>
<evidence type="ECO:0000255" key="1">
    <source>
        <dbReference type="PROSITE-ProRule" id="PRU00173"/>
    </source>
</evidence>
<evidence type="ECO:0000305" key="2"/>
<gene>
    <name type="primary">STR6</name>
    <name type="ordered locus">At1g09280</name>
    <name type="ORF">T12M4.1</name>
</gene>
<sequence length="581" mass="64734">MGTSSCGDHEKQRIEDEEQYGVLLYYKYTSVPDLDELVSFYESSCNSLGLLGRVRLSPKGVNVTVGGKLTALEEHIAAAKSNCLFEGTDFKLASCHHPLNDKVAEECGFTSLSIRVVEELVTFSPCPPLKPPEISNAGKHLSAAEFHSVLQSANGKSENKELVLLDARNLYETRIGKFESENVETLDPEIRQYSDLPTWIDQNAEKMKGKNVLMYCTGGIRCEMASAYIRSKGAGFENTFQLYGGIQRYLEQFPSGGFFKGKNFVFDHRISVGSSKEDIIGSCLLCNNTFDDYSPRCRCRLCRMLVLVCNHCRVKGDIYICELCRKHGKGEVPLSLDPLNQPSESNGDNTRRKLRILCLHGFRQNASSFKGRTGSLAKKLKNIAELVFIDAPHELQFIYQTATPPSGVCNKKFAWLVSSDFDKPSETGWTVAQCQFDPLQYQTQTEGFDKSLTYLKTAFEEKGPFDGILGFSQGAAMAAAVCGKQEQLVGEIDFRFCVLCSGFTPWPLLEMKEKRSIKCPSLHIFGSQPGKDRQIVTQASSDLAGLFEDGCATIVEHDFGHIIPTKSPYIDEIKAFLYQFI</sequence>
<comment type="sequence caution" evidence="2">
    <conflict type="erroneous gene model prediction">
        <sequence resource="EMBL-CDS" id="AAC24078"/>
    </conflict>
</comment>
<organism>
    <name type="scientific">Arabidopsis thaliana</name>
    <name type="common">Mouse-ear cress</name>
    <dbReference type="NCBI Taxonomy" id="3702"/>
    <lineage>
        <taxon>Eukaryota</taxon>
        <taxon>Viridiplantae</taxon>
        <taxon>Streptophyta</taxon>
        <taxon>Embryophyta</taxon>
        <taxon>Tracheophyta</taxon>
        <taxon>Spermatophyta</taxon>
        <taxon>Magnoliopsida</taxon>
        <taxon>eudicotyledons</taxon>
        <taxon>Gunneridae</taxon>
        <taxon>Pentapetalae</taxon>
        <taxon>rosids</taxon>
        <taxon>malvids</taxon>
        <taxon>Brassicales</taxon>
        <taxon>Brassicaceae</taxon>
        <taxon>Camelineae</taxon>
        <taxon>Arabidopsis</taxon>
    </lineage>
</organism>
<name>STR6_ARATH</name>
<dbReference type="EMBL" id="AC003114">
    <property type="protein sequence ID" value="AAC24078.1"/>
    <property type="status" value="ALT_SEQ"/>
    <property type="molecule type" value="Genomic_DNA"/>
</dbReference>
<dbReference type="EMBL" id="CP002684">
    <property type="protein sequence ID" value="AEE28424.1"/>
    <property type="molecule type" value="Genomic_DNA"/>
</dbReference>
<dbReference type="EMBL" id="AY048288">
    <property type="protein sequence ID" value="AAK82550.1"/>
    <property type="molecule type" value="mRNA"/>
</dbReference>
<dbReference type="EMBL" id="BT030364">
    <property type="protein sequence ID" value="ABO38777.1"/>
    <property type="molecule type" value="mRNA"/>
</dbReference>
<dbReference type="PIR" id="G86225">
    <property type="entry name" value="G86225"/>
</dbReference>
<dbReference type="RefSeq" id="NP_563840.1">
    <property type="nucleotide sequence ID" value="NM_100798.4"/>
</dbReference>
<dbReference type="SMR" id="Q94AC1"/>
<dbReference type="FunCoup" id="Q94AC1">
    <property type="interactions" value="2715"/>
</dbReference>
<dbReference type="STRING" id="3702.Q94AC1"/>
<dbReference type="ESTHER" id="arath-At1g09280">
    <property type="family name" value="FSH1"/>
</dbReference>
<dbReference type="GlyGen" id="Q94AC1">
    <property type="glycosylation" value="1 site"/>
</dbReference>
<dbReference type="iPTMnet" id="Q94AC1"/>
<dbReference type="PaxDb" id="3702-AT1G09280.1"/>
<dbReference type="ProteomicsDB" id="228430"/>
<dbReference type="EnsemblPlants" id="AT1G09280.1">
    <property type="protein sequence ID" value="AT1G09280.1"/>
    <property type="gene ID" value="AT1G09280"/>
</dbReference>
<dbReference type="GeneID" id="837449"/>
<dbReference type="Gramene" id="AT1G09280.1">
    <property type="protein sequence ID" value="AT1G09280.1"/>
    <property type="gene ID" value="AT1G09280"/>
</dbReference>
<dbReference type="KEGG" id="ath:AT1G09280"/>
<dbReference type="Araport" id="AT1G09280"/>
<dbReference type="TAIR" id="AT1G09280"/>
<dbReference type="eggNOG" id="KOG2551">
    <property type="taxonomic scope" value="Eukaryota"/>
</dbReference>
<dbReference type="HOGENOM" id="CLU_030609_0_0_1"/>
<dbReference type="InParanoid" id="Q94AC1"/>
<dbReference type="OMA" id="RCSYCRM"/>
<dbReference type="PhylomeDB" id="Q94AC1"/>
<dbReference type="PRO" id="PR:Q94AC1"/>
<dbReference type="Proteomes" id="UP000006548">
    <property type="component" value="Chromosome 1"/>
</dbReference>
<dbReference type="ExpressionAtlas" id="Q94AC1">
    <property type="expression patterns" value="baseline and differential"/>
</dbReference>
<dbReference type="CDD" id="cd01518">
    <property type="entry name" value="RHOD_YceA"/>
    <property type="match status" value="1"/>
</dbReference>
<dbReference type="FunFam" id="3.40.50.1820:FF:000073">
    <property type="entry name" value="esterase OVCA2 isoform X6"/>
    <property type="match status" value="1"/>
</dbReference>
<dbReference type="FunFam" id="3.30.70.100:FF:000045">
    <property type="entry name" value="Rhodanese-like domain-containing protein 6"/>
    <property type="match status" value="1"/>
</dbReference>
<dbReference type="FunFam" id="3.40.250.10:FF:000022">
    <property type="entry name" value="Thiosulfate sulfurtransferase/rhodanese-like domain-containing protein 2"/>
    <property type="match status" value="1"/>
</dbReference>
<dbReference type="Gene3D" id="3.30.70.100">
    <property type="match status" value="1"/>
</dbReference>
<dbReference type="Gene3D" id="3.40.50.1820">
    <property type="entry name" value="alpha/beta hydrolase"/>
    <property type="match status" value="1"/>
</dbReference>
<dbReference type="Gene3D" id="3.40.250.10">
    <property type="entry name" value="Rhodanese-like domain"/>
    <property type="match status" value="1"/>
</dbReference>
<dbReference type="InterPro" id="IPR029058">
    <property type="entry name" value="AB_hydrolase_fold"/>
</dbReference>
<dbReference type="InterPro" id="IPR005645">
    <property type="entry name" value="FSH-like_dom"/>
</dbReference>
<dbReference type="InterPro" id="IPR001763">
    <property type="entry name" value="Rhodanese-like_dom"/>
</dbReference>
<dbReference type="InterPro" id="IPR036873">
    <property type="entry name" value="Rhodanese-like_dom_sf"/>
</dbReference>
<dbReference type="InterPro" id="IPR022111">
    <property type="entry name" value="Rhodanese_C"/>
</dbReference>
<dbReference type="InterPro" id="IPR020936">
    <property type="entry name" value="TrhO"/>
</dbReference>
<dbReference type="InterPro" id="IPR040503">
    <property type="entry name" value="TRHO_N"/>
</dbReference>
<dbReference type="PANTHER" id="PTHR43268">
    <property type="entry name" value="THIOSULFATE SULFURTRANSFERASE/RHODANESE-LIKE DOMAIN-CONTAINING PROTEIN 2"/>
    <property type="match status" value="1"/>
</dbReference>
<dbReference type="PANTHER" id="PTHR43268:SF6">
    <property type="entry name" value="THIOSULFATE SULFURTRANSFERASE_RHODANESE-LIKE DOMAIN-CONTAINING PROTEIN 2"/>
    <property type="match status" value="1"/>
</dbReference>
<dbReference type="Pfam" id="PF03959">
    <property type="entry name" value="FSH1"/>
    <property type="match status" value="1"/>
</dbReference>
<dbReference type="Pfam" id="PF12368">
    <property type="entry name" value="Rhodanese_C"/>
    <property type="match status" value="1"/>
</dbReference>
<dbReference type="Pfam" id="PF17773">
    <property type="entry name" value="UPF0176_N"/>
    <property type="match status" value="1"/>
</dbReference>
<dbReference type="SMART" id="SM00450">
    <property type="entry name" value="RHOD"/>
    <property type="match status" value="1"/>
</dbReference>
<dbReference type="SUPFAM" id="SSF53474">
    <property type="entry name" value="alpha/beta-Hydrolases"/>
    <property type="match status" value="1"/>
</dbReference>
<dbReference type="SUPFAM" id="SSF52821">
    <property type="entry name" value="Rhodanese/Cell cycle control phosphatase"/>
    <property type="match status" value="1"/>
</dbReference>
<dbReference type="PROSITE" id="PS50206">
    <property type="entry name" value="RHODANESE_3"/>
    <property type="match status" value="1"/>
</dbReference>
<accession>Q94AC1</accession>
<accession>O80479</accession>
<protein>
    <recommendedName>
        <fullName>Rhodanese-like domain-containing protein 6</fullName>
    </recommendedName>
    <alternativeName>
        <fullName>Sulfurtransferase 6</fullName>
        <shortName>AtStr6</shortName>
    </alternativeName>
</protein>
<keyword id="KW-1185">Reference proteome</keyword>
<reference key="1">
    <citation type="journal article" date="2000" name="Nature">
        <title>Sequence and analysis of chromosome 1 of the plant Arabidopsis thaliana.</title>
        <authorList>
            <person name="Theologis A."/>
            <person name="Ecker J.R."/>
            <person name="Palm C.J."/>
            <person name="Federspiel N.A."/>
            <person name="Kaul S."/>
            <person name="White O."/>
            <person name="Alonso J."/>
            <person name="Altafi H."/>
            <person name="Araujo R."/>
            <person name="Bowman C.L."/>
            <person name="Brooks S.Y."/>
            <person name="Buehler E."/>
            <person name="Chan A."/>
            <person name="Chao Q."/>
            <person name="Chen H."/>
            <person name="Cheuk R.F."/>
            <person name="Chin C.W."/>
            <person name="Chung M.K."/>
            <person name="Conn L."/>
            <person name="Conway A.B."/>
            <person name="Conway A.R."/>
            <person name="Creasy T.H."/>
            <person name="Dewar K."/>
            <person name="Dunn P."/>
            <person name="Etgu P."/>
            <person name="Feldblyum T.V."/>
            <person name="Feng J.-D."/>
            <person name="Fong B."/>
            <person name="Fujii C.Y."/>
            <person name="Gill J.E."/>
            <person name="Goldsmith A.D."/>
            <person name="Haas B."/>
            <person name="Hansen N.F."/>
            <person name="Hughes B."/>
            <person name="Huizar L."/>
            <person name="Hunter J.L."/>
            <person name="Jenkins J."/>
            <person name="Johnson-Hopson C."/>
            <person name="Khan S."/>
            <person name="Khaykin E."/>
            <person name="Kim C.J."/>
            <person name="Koo H.L."/>
            <person name="Kremenetskaia I."/>
            <person name="Kurtz D.B."/>
            <person name="Kwan A."/>
            <person name="Lam B."/>
            <person name="Langin-Hooper S."/>
            <person name="Lee A."/>
            <person name="Lee J.M."/>
            <person name="Lenz C.A."/>
            <person name="Li J.H."/>
            <person name="Li Y.-P."/>
            <person name="Lin X."/>
            <person name="Liu S.X."/>
            <person name="Liu Z.A."/>
            <person name="Luros J.S."/>
            <person name="Maiti R."/>
            <person name="Marziali A."/>
            <person name="Militscher J."/>
            <person name="Miranda M."/>
            <person name="Nguyen M."/>
            <person name="Nierman W.C."/>
            <person name="Osborne B.I."/>
            <person name="Pai G."/>
            <person name="Peterson J."/>
            <person name="Pham P.K."/>
            <person name="Rizzo M."/>
            <person name="Rooney T."/>
            <person name="Rowley D."/>
            <person name="Sakano H."/>
            <person name="Salzberg S.L."/>
            <person name="Schwartz J.R."/>
            <person name="Shinn P."/>
            <person name="Southwick A.M."/>
            <person name="Sun H."/>
            <person name="Tallon L.J."/>
            <person name="Tambunga G."/>
            <person name="Toriumi M.J."/>
            <person name="Town C.D."/>
            <person name="Utterback T."/>
            <person name="Van Aken S."/>
            <person name="Vaysberg M."/>
            <person name="Vysotskaia V.S."/>
            <person name="Walker M."/>
            <person name="Wu D."/>
            <person name="Yu G."/>
            <person name="Fraser C.M."/>
            <person name="Venter J.C."/>
            <person name="Davis R.W."/>
        </authorList>
    </citation>
    <scope>NUCLEOTIDE SEQUENCE [LARGE SCALE GENOMIC DNA]</scope>
    <source>
        <strain>cv. Columbia</strain>
    </source>
</reference>
<reference key="2">
    <citation type="journal article" date="2017" name="Plant J.">
        <title>Araport11: a complete reannotation of the Arabidopsis thaliana reference genome.</title>
        <authorList>
            <person name="Cheng C.Y."/>
            <person name="Krishnakumar V."/>
            <person name="Chan A.P."/>
            <person name="Thibaud-Nissen F."/>
            <person name="Schobel S."/>
            <person name="Town C.D."/>
        </authorList>
    </citation>
    <scope>GENOME REANNOTATION</scope>
    <source>
        <strain>cv. Columbia</strain>
    </source>
</reference>
<reference key="3">
    <citation type="journal article" date="2003" name="Science">
        <title>Empirical analysis of transcriptional activity in the Arabidopsis genome.</title>
        <authorList>
            <person name="Yamada K."/>
            <person name="Lim J."/>
            <person name="Dale J.M."/>
            <person name="Chen H."/>
            <person name="Shinn P."/>
            <person name="Palm C.J."/>
            <person name="Southwick A.M."/>
            <person name="Wu H.C."/>
            <person name="Kim C.J."/>
            <person name="Nguyen M."/>
            <person name="Pham P.K."/>
            <person name="Cheuk R.F."/>
            <person name="Karlin-Newmann G."/>
            <person name="Liu S.X."/>
            <person name="Lam B."/>
            <person name="Sakano H."/>
            <person name="Wu T."/>
            <person name="Yu G."/>
            <person name="Miranda M."/>
            <person name="Quach H.L."/>
            <person name="Tripp M."/>
            <person name="Chang C.H."/>
            <person name="Lee J.M."/>
            <person name="Toriumi M.J."/>
            <person name="Chan M.M."/>
            <person name="Tang C.C."/>
            <person name="Onodera C.S."/>
            <person name="Deng J.M."/>
            <person name="Akiyama K."/>
            <person name="Ansari Y."/>
            <person name="Arakawa T."/>
            <person name="Banh J."/>
            <person name="Banno F."/>
            <person name="Bowser L."/>
            <person name="Brooks S.Y."/>
            <person name="Carninci P."/>
            <person name="Chao Q."/>
            <person name="Choy N."/>
            <person name="Enju A."/>
            <person name="Goldsmith A.D."/>
            <person name="Gurjal M."/>
            <person name="Hansen N.F."/>
            <person name="Hayashizaki Y."/>
            <person name="Johnson-Hopson C."/>
            <person name="Hsuan V.W."/>
            <person name="Iida K."/>
            <person name="Karnes M."/>
            <person name="Khan S."/>
            <person name="Koesema E."/>
            <person name="Ishida J."/>
            <person name="Jiang P.X."/>
            <person name="Jones T."/>
            <person name="Kawai J."/>
            <person name="Kamiya A."/>
            <person name="Meyers C."/>
            <person name="Nakajima M."/>
            <person name="Narusaka M."/>
            <person name="Seki M."/>
            <person name="Sakurai T."/>
            <person name="Satou M."/>
            <person name="Tamse R."/>
            <person name="Vaysberg M."/>
            <person name="Wallender E.K."/>
            <person name="Wong C."/>
            <person name="Yamamura Y."/>
            <person name="Yuan S."/>
            <person name="Shinozaki K."/>
            <person name="Davis R.W."/>
            <person name="Theologis A."/>
            <person name="Ecker J.R."/>
        </authorList>
    </citation>
    <scope>NUCLEOTIDE SEQUENCE [LARGE SCALE MRNA]</scope>
    <source>
        <strain>cv. Columbia</strain>
    </source>
</reference>
<reference key="4">
    <citation type="submission" date="2007-03" db="EMBL/GenBank/DDBJ databases">
        <title>Arabidopsis ORF clones.</title>
        <authorList>
            <person name="Bautista V.R."/>
            <person name="Kim C.J."/>
            <person name="Chen H."/>
            <person name="Wu S.Y."/>
            <person name="De Los Reyes C."/>
            <person name="Ecker J.R."/>
        </authorList>
    </citation>
    <scope>NUCLEOTIDE SEQUENCE [LARGE SCALE MRNA]</scope>
    <source>
        <strain>cv. Columbia</strain>
    </source>
</reference>
<reference key="5">
    <citation type="journal article" date="2007" name="Plant Physiol. Biochem.">
        <title>Differential expression of Arabidopsis sulfurtransferases under various growth conditions.</title>
        <authorList>
            <person name="Bartels A."/>
            <person name="Mock H.P."/>
            <person name="Papenbrock J."/>
        </authorList>
    </citation>
    <scope>GENE FAMILY</scope>
    <scope>NOMENCLATURE</scope>
</reference>
<proteinExistence type="evidence at transcript level"/>